<gene>
    <name evidence="1" type="primary">kdpC</name>
    <name type="ordered locus">BMA10247_0368</name>
</gene>
<organism>
    <name type="scientific">Burkholderia mallei (strain NCTC 10247)</name>
    <dbReference type="NCBI Taxonomy" id="320389"/>
    <lineage>
        <taxon>Bacteria</taxon>
        <taxon>Pseudomonadati</taxon>
        <taxon>Pseudomonadota</taxon>
        <taxon>Betaproteobacteria</taxon>
        <taxon>Burkholderiales</taxon>
        <taxon>Burkholderiaceae</taxon>
        <taxon>Burkholderia</taxon>
        <taxon>pseudomallei group</taxon>
    </lineage>
</organism>
<accession>A3MI57</accession>
<dbReference type="EMBL" id="CP000548">
    <property type="protein sequence ID" value="ABO05434.1"/>
    <property type="molecule type" value="Genomic_DNA"/>
</dbReference>
<dbReference type="RefSeq" id="WP_004186443.1">
    <property type="nucleotide sequence ID" value="NZ_CP007802.1"/>
</dbReference>
<dbReference type="SMR" id="A3MI57"/>
<dbReference type="GeneID" id="93059654"/>
<dbReference type="KEGG" id="bmaz:BM44_2640"/>
<dbReference type="KEGG" id="bmn:BMA10247_0368"/>
<dbReference type="PATRIC" id="fig|320389.8.peg.2978"/>
<dbReference type="GO" id="GO:0005886">
    <property type="term" value="C:plasma membrane"/>
    <property type="evidence" value="ECO:0007669"/>
    <property type="project" value="UniProtKB-SubCell"/>
</dbReference>
<dbReference type="GO" id="GO:0005524">
    <property type="term" value="F:ATP binding"/>
    <property type="evidence" value="ECO:0007669"/>
    <property type="project" value="UniProtKB-UniRule"/>
</dbReference>
<dbReference type="GO" id="GO:0008556">
    <property type="term" value="F:P-type potassium transmembrane transporter activity"/>
    <property type="evidence" value="ECO:0007669"/>
    <property type="project" value="InterPro"/>
</dbReference>
<dbReference type="HAMAP" id="MF_00276">
    <property type="entry name" value="KdpC"/>
    <property type="match status" value="1"/>
</dbReference>
<dbReference type="InterPro" id="IPR003820">
    <property type="entry name" value="KdpC"/>
</dbReference>
<dbReference type="NCBIfam" id="TIGR00681">
    <property type="entry name" value="kdpC"/>
    <property type="match status" value="1"/>
</dbReference>
<dbReference type="NCBIfam" id="NF001454">
    <property type="entry name" value="PRK00315.1"/>
    <property type="match status" value="1"/>
</dbReference>
<dbReference type="PANTHER" id="PTHR30042">
    <property type="entry name" value="POTASSIUM-TRANSPORTING ATPASE C CHAIN"/>
    <property type="match status" value="1"/>
</dbReference>
<dbReference type="PANTHER" id="PTHR30042:SF2">
    <property type="entry name" value="POTASSIUM-TRANSPORTING ATPASE KDPC SUBUNIT"/>
    <property type="match status" value="1"/>
</dbReference>
<dbReference type="Pfam" id="PF02669">
    <property type="entry name" value="KdpC"/>
    <property type="match status" value="1"/>
</dbReference>
<dbReference type="PIRSF" id="PIRSF001296">
    <property type="entry name" value="K_ATPase_KdpC"/>
    <property type="match status" value="1"/>
</dbReference>
<reference key="1">
    <citation type="journal article" date="2010" name="Genome Biol. Evol.">
        <title>Continuing evolution of Burkholderia mallei through genome reduction and large-scale rearrangements.</title>
        <authorList>
            <person name="Losada L."/>
            <person name="Ronning C.M."/>
            <person name="DeShazer D."/>
            <person name="Woods D."/>
            <person name="Fedorova N."/>
            <person name="Kim H.S."/>
            <person name="Shabalina S.A."/>
            <person name="Pearson T.R."/>
            <person name="Brinkac L."/>
            <person name="Tan P."/>
            <person name="Nandi T."/>
            <person name="Crabtree J."/>
            <person name="Badger J."/>
            <person name="Beckstrom-Sternberg S."/>
            <person name="Saqib M."/>
            <person name="Schutzer S.E."/>
            <person name="Keim P."/>
            <person name="Nierman W.C."/>
        </authorList>
    </citation>
    <scope>NUCLEOTIDE SEQUENCE [LARGE SCALE GENOMIC DNA]</scope>
    <source>
        <strain>NCTC 10247</strain>
    </source>
</reference>
<evidence type="ECO:0000255" key="1">
    <source>
        <dbReference type="HAMAP-Rule" id="MF_00276"/>
    </source>
</evidence>
<feature type="chain" id="PRO_1000022269" description="Potassium-transporting ATPase KdpC subunit">
    <location>
        <begin position="1"/>
        <end position="193"/>
    </location>
</feature>
<feature type="transmembrane region" description="Helical" evidence="1">
    <location>
        <begin position="7"/>
        <end position="27"/>
    </location>
</feature>
<protein>
    <recommendedName>
        <fullName evidence="1">Potassium-transporting ATPase KdpC subunit</fullName>
    </recommendedName>
    <alternativeName>
        <fullName evidence="1">ATP phosphohydrolase [potassium-transporting] C chain</fullName>
    </alternativeName>
    <alternativeName>
        <fullName evidence="1">Potassium-binding and translocating subunit C</fullName>
    </alternativeName>
    <alternativeName>
        <fullName evidence="1">Potassium-translocating ATPase C chain</fullName>
    </alternativeName>
</protein>
<comment type="function">
    <text evidence="1">Part of the high-affinity ATP-driven potassium transport (or Kdp) system, which catalyzes the hydrolysis of ATP coupled with the electrogenic transport of potassium into the cytoplasm. This subunit acts as a catalytic chaperone that increases the ATP-binding affinity of the ATP-hydrolyzing subunit KdpB by the formation of a transient KdpB/KdpC/ATP ternary complex.</text>
</comment>
<comment type="subunit">
    <text evidence="1">The system is composed of three essential subunits: KdpA, KdpB and KdpC.</text>
</comment>
<comment type="subcellular location">
    <subcellularLocation>
        <location evidence="1">Cell inner membrane</location>
        <topology evidence="1">Single-pass membrane protein</topology>
    </subcellularLocation>
</comment>
<comment type="similarity">
    <text evidence="1">Belongs to the KdpC family.</text>
</comment>
<sequence length="193" mass="20105">MKSLFRPLIVVFVVLVAVTGLAYPAVMTVFGQAVFPAQANGSLIEKGGRVVGSALIGQQFDAPQYFWGRLSATSPMPYNAAGSGGSNLGPLNPALKDQVKSRLDALKAAGTDLSQPVPVDLVTASASGLDPEISPAAADYQVARVARARKMADADVRRLVADHTSGRQFGVLGEPRVNVLKLNLALDAAQAAH</sequence>
<name>KDPC_BURM7</name>
<proteinExistence type="inferred from homology"/>
<keyword id="KW-0067">ATP-binding</keyword>
<keyword id="KW-0997">Cell inner membrane</keyword>
<keyword id="KW-1003">Cell membrane</keyword>
<keyword id="KW-0406">Ion transport</keyword>
<keyword id="KW-0472">Membrane</keyword>
<keyword id="KW-0547">Nucleotide-binding</keyword>
<keyword id="KW-0630">Potassium</keyword>
<keyword id="KW-0633">Potassium transport</keyword>
<keyword id="KW-0812">Transmembrane</keyword>
<keyword id="KW-1133">Transmembrane helix</keyword>
<keyword id="KW-0813">Transport</keyword>